<organism>
    <name type="scientific">Yersinia enterocolitica serotype O:8 / biotype 1B (strain NCTC 13174 / 8081)</name>
    <dbReference type="NCBI Taxonomy" id="393305"/>
    <lineage>
        <taxon>Bacteria</taxon>
        <taxon>Pseudomonadati</taxon>
        <taxon>Pseudomonadota</taxon>
        <taxon>Gammaproteobacteria</taxon>
        <taxon>Enterobacterales</taxon>
        <taxon>Yersiniaceae</taxon>
        <taxon>Yersinia</taxon>
    </lineage>
</organism>
<dbReference type="EMBL" id="AM286415">
    <property type="protein sequence ID" value="CAL11458.1"/>
    <property type="molecule type" value="Genomic_DNA"/>
</dbReference>
<dbReference type="RefSeq" id="WP_011815953.1">
    <property type="nucleotide sequence ID" value="NC_008800.1"/>
</dbReference>
<dbReference type="RefSeq" id="YP_001005682.1">
    <property type="nucleotide sequence ID" value="NC_008800.1"/>
</dbReference>
<dbReference type="SMR" id="A1JK02"/>
<dbReference type="KEGG" id="yen:YE1367"/>
<dbReference type="PATRIC" id="fig|393305.7.peg.1486"/>
<dbReference type="eggNOG" id="COG4702">
    <property type="taxonomic scope" value="Bacteria"/>
</dbReference>
<dbReference type="HOGENOM" id="CLU_101036_2_2_6"/>
<dbReference type="OrthoDB" id="9815315at2"/>
<dbReference type="Proteomes" id="UP000000642">
    <property type="component" value="Chromosome"/>
</dbReference>
<dbReference type="Gene3D" id="3.30.450.150">
    <property type="entry name" value="Haem-degrading domain"/>
    <property type="match status" value="1"/>
</dbReference>
<dbReference type="HAMAP" id="MF_00761">
    <property type="entry name" value="UPF0303"/>
    <property type="match status" value="1"/>
</dbReference>
<dbReference type="InterPro" id="IPR005624">
    <property type="entry name" value="PduO/GlcC-like"/>
</dbReference>
<dbReference type="InterPro" id="IPR038084">
    <property type="entry name" value="PduO/GlcC-like_sf"/>
</dbReference>
<dbReference type="InterPro" id="IPR010371">
    <property type="entry name" value="YBR137W-like"/>
</dbReference>
<dbReference type="NCBIfam" id="NF002694">
    <property type="entry name" value="PRK02487.1-3"/>
    <property type="match status" value="1"/>
</dbReference>
<dbReference type="NCBIfam" id="NF002696">
    <property type="entry name" value="PRK02487.1-5"/>
    <property type="match status" value="1"/>
</dbReference>
<dbReference type="PANTHER" id="PTHR28255">
    <property type="match status" value="1"/>
</dbReference>
<dbReference type="PANTHER" id="PTHR28255:SF1">
    <property type="entry name" value="UPF0303 PROTEIN YBR137W"/>
    <property type="match status" value="1"/>
</dbReference>
<dbReference type="Pfam" id="PF03928">
    <property type="entry name" value="HbpS-like"/>
    <property type="match status" value="1"/>
</dbReference>
<dbReference type="PIRSF" id="PIRSF008757">
    <property type="entry name" value="UCP008757"/>
    <property type="match status" value="1"/>
</dbReference>
<dbReference type="SUPFAM" id="SSF143744">
    <property type="entry name" value="GlcG-like"/>
    <property type="match status" value="1"/>
</dbReference>
<reference key="1">
    <citation type="journal article" date="2006" name="PLoS Genet.">
        <title>The complete genome sequence and comparative genome analysis of the high pathogenicity Yersinia enterocolitica strain 8081.</title>
        <authorList>
            <person name="Thomson N.R."/>
            <person name="Howard S."/>
            <person name="Wren B.W."/>
            <person name="Holden M.T.G."/>
            <person name="Crossman L."/>
            <person name="Challis G.L."/>
            <person name="Churcher C."/>
            <person name="Mungall K."/>
            <person name="Brooks K."/>
            <person name="Chillingworth T."/>
            <person name="Feltwell T."/>
            <person name="Abdellah Z."/>
            <person name="Hauser H."/>
            <person name="Jagels K."/>
            <person name="Maddison M."/>
            <person name="Moule S."/>
            <person name="Sanders M."/>
            <person name="Whitehead S."/>
            <person name="Quail M.A."/>
            <person name="Dougan G."/>
            <person name="Parkhill J."/>
            <person name="Prentice M.B."/>
        </authorList>
    </citation>
    <scope>NUCLEOTIDE SEQUENCE [LARGE SCALE GENOMIC DNA]</scope>
    <source>
        <strain>NCTC 13174 / 8081</strain>
    </source>
</reference>
<gene>
    <name type="ordered locus">YE1367</name>
</gene>
<feature type="chain" id="PRO_1000046754" description="UPF0303 protein YE1367">
    <location>
        <begin position="1"/>
        <end position="168"/>
    </location>
</feature>
<sequence length="168" mass="18464">MNLQQQLSHCQQHQHLLQLTHFNHETAWQLGEKIKQQAELQGVALAINIRVNGQTLFSYAMPGTCAENADWLRRKRNVVELLGTSSYAAGLMLQQRQTSLEERYGVSLRDYAALGGGFPLQVKQAGIIGSVNVSGAPHLDDHNLLLQVLADFIGLPAGSIELLAPLTE</sequence>
<protein>
    <recommendedName>
        <fullName evidence="1">UPF0303 protein YE1367</fullName>
    </recommendedName>
</protein>
<evidence type="ECO:0000255" key="1">
    <source>
        <dbReference type="HAMAP-Rule" id="MF_00761"/>
    </source>
</evidence>
<proteinExistence type="inferred from homology"/>
<comment type="similarity">
    <text evidence="1">Belongs to the UPF0303 family.</text>
</comment>
<accession>A1JK02</accession>
<name>Y1367_YERE8</name>